<feature type="chain" id="PRO_0000059323" description="Polycomb group protein Asx">
    <location>
        <begin position="1"/>
        <end position="1669"/>
    </location>
</feature>
<feature type="domain" description="DEUBAD" evidence="1">
    <location>
        <begin position="215"/>
        <end position="338"/>
    </location>
</feature>
<feature type="zinc finger region" description="PHD-type; atypical" evidence="10">
    <location>
        <begin position="1602"/>
        <end position="1666"/>
    </location>
</feature>
<feature type="region of interest" description="Disordered" evidence="2">
    <location>
        <begin position="90"/>
        <end position="109"/>
    </location>
</feature>
<feature type="region of interest" description="Disordered" evidence="2">
    <location>
        <begin position="336"/>
        <end position="378"/>
    </location>
</feature>
<feature type="region of interest" description="Disordered" evidence="2">
    <location>
        <begin position="410"/>
        <end position="478"/>
    </location>
</feature>
<feature type="region of interest" description="Disordered" evidence="2">
    <location>
        <begin position="635"/>
        <end position="718"/>
    </location>
</feature>
<feature type="region of interest" description="Disordered" evidence="2">
    <location>
        <begin position="952"/>
        <end position="972"/>
    </location>
</feature>
<feature type="region of interest" description="Disordered" evidence="2">
    <location>
        <begin position="1174"/>
        <end position="1193"/>
    </location>
</feature>
<feature type="region of interest" description="Disordered" evidence="2">
    <location>
        <begin position="1398"/>
        <end position="1437"/>
    </location>
</feature>
<feature type="region of interest" description="Disordered" evidence="2">
    <location>
        <begin position="1482"/>
        <end position="1505"/>
    </location>
</feature>
<feature type="region of interest" description="Disordered" evidence="2">
    <location>
        <begin position="1587"/>
        <end position="1610"/>
    </location>
</feature>
<feature type="short sequence motif" description="LXXLL motif 1" evidence="7">
    <location>
        <begin position="224"/>
        <end position="228"/>
    </location>
</feature>
<feature type="short sequence motif" description="LXXLL motif 2" evidence="7">
    <location>
        <begin position="244"/>
        <end position="248"/>
    </location>
</feature>
<feature type="short sequence motif" description="NEF motif" evidence="6 7">
    <location>
        <begin position="283"/>
        <end position="285"/>
    </location>
</feature>
<feature type="compositionally biased region" description="Basic and acidic residues" evidence="2">
    <location>
        <begin position="336"/>
        <end position="352"/>
    </location>
</feature>
<feature type="compositionally biased region" description="Polar residues" evidence="2">
    <location>
        <begin position="367"/>
        <end position="378"/>
    </location>
</feature>
<feature type="compositionally biased region" description="Polar residues" evidence="2">
    <location>
        <begin position="413"/>
        <end position="425"/>
    </location>
</feature>
<feature type="compositionally biased region" description="Polar residues" evidence="2">
    <location>
        <begin position="434"/>
        <end position="450"/>
    </location>
</feature>
<feature type="compositionally biased region" description="Basic and acidic residues" evidence="2">
    <location>
        <begin position="465"/>
        <end position="474"/>
    </location>
</feature>
<feature type="compositionally biased region" description="Low complexity" evidence="2">
    <location>
        <begin position="635"/>
        <end position="650"/>
    </location>
</feature>
<feature type="compositionally biased region" description="Basic and acidic residues" evidence="2">
    <location>
        <begin position="651"/>
        <end position="661"/>
    </location>
</feature>
<feature type="compositionally biased region" description="Low complexity" evidence="2">
    <location>
        <begin position="666"/>
        <end position="718"/>
    </location>
</feature>
<feature type="compositionally biased region" description="Low complexity" evidence="2">
    <location>
        <begin position="1174"/>
        <end position="1192"/>
    </location>
</feature>
<feature type="compositionally biased region" description="Low complexity" evidence="2">
    <location>
        <begin position="1404"/>
        <end position="1436"/>
    </location>
</feature>
<feature type="compositionally biased region" description="Low complexity" evidence="2">
    <location>
        <begin position="1592"/>
        <end position="1610"/>
    </location>
</feature>
<feature type="mutagenesis site" description="Reduced affinity for ubiquitin and loss of ubiquitinase activity of the PR-DUB complex." evidence="6">
    <original>E</original>
    <variation>K</variation>
    <variation>Q</variation>
    <location>
        <position position="284"/>
    </location>
</feature>
<feature type="mutagenesis site" description="Reduced affinity for ubiquitin and loss of ubiquitinase activity of the PR-DUB complex." evidence="6">
    <original>R</original>
    <variation>N</variation>
    <location>
        <position position="288"/>
    </location>
</feature>
<feature type="sequence conflict" description="In Ref. 1; CAA04568." evidence="10" ref="1">
    <original>SQ</original>
    <variation>CE</variation>
    <location>
        <begin position="14"/>
        <end position="15"/>
    </location>
</feature>
<feature type="sequence conflict" description="In Ref. 1; CAA04568." evidence="10" ref="1">
    <original>K</original>
    <variation>N</variation>
    <location>
        <position position="187"/>
    </location>
</feature>
<feature type="sequence conflict" description="In Ref. 1; CAA04568." evidence="10" ref="1">
    <original>S</original>
    <variation>T</variation>
    <location>
        <position position="1253"/>
    </location>
</feature>
<feature type="sequence conflict" description="In Ref. 1; CAA04568." evidence="10" ref="1">
    <location>
        <position position="1520"/>
    </location>
</feature>
<feature type="turn" evidence="16">
    <location>
        <begin position="215"/>
        <end position="217"/>
    </location>
</feature>
<feature type="helix" evidence="17">
    <location>
        <begin position="218"/>
        <end position="221"/>
    </location>
</feature>
<feature type="helix" evidence="17">
    <location>
        <begin position="224"/>
        <end position="227"/>
    </location>
</feature>
<feature type="helix" evidence="17">
    <location>
        <begin position="230"/>
        <end position="234"/>
    </location>
</feature>
<feature type="helix" evidence="17">
    <location>
        <begin position="238"/>
        <end position="245"/>
    </location>
</feature>
<feature type="helix" evidence="17">
    <location>
        <begin position="250"/>
        <end position="256"/>
    </location>
</feature>
<feature type="turn" evidence="17">
    <location>
        <begin position="278"/>
        <end position="280"/>
    </location>
</feature>
<feature type="strand" evidence="17">
    <location>
        <begin position="281"/>
        <end position="284"/>
    </location>
</feature>
<feature type="helix" evidence="17">
    <location>
        <begin position="285"/>
        <end position="299"/>
    </location>
</feature>
<feature type="turn" evidence="17">
    <location>
        <begin position="300"/>
        <end position="302"/>
    </location>
</feature>
<feature type="helix" evidence="17">
    <location>
        <begin position="304"/>
        <end position="317"/>
    </location>
</feature>
<sequence length="1669" mass="179842">MKTITPDTTTTTSSQHQQLLIPQADQHHQPMLQQQSLLAAPPPTMIMEHVNLVDDDEKDPLALEQLEVSPSTKHTHSLRRHLPRIIVKPIPPEKKPMAPSEEAAVSTAPAPPTRLICSRRIQQQQQVKAAAAAAAAAAAAAAAAAAAAQAQATSSYPSAISPGSKAGTSQASTMREVLASIPGFSVKPRRRSNKKLTTAAQIEQTKDGKIDLETPDSILASTNLRALLNKQTFSLLPPLYQYNLIQLLPSVDREASELEQPSSSASGGSPSEAIRLSASCLNNEFFARACLEWRERLSEGEFTPENQLKLKTEAEREKNKLDPWKLKHFEPFWGEKNSRGKDKDKLESDCKNQKLSASIKSEPKPPATSQQKPLQQATCDNETELKFDLSTKCETTSAKTTVAVAVADKSSTFPPTGSQNNVLNEQQRRVLKRPSSSPSQRKQAPTTIATINLDDDLDELPSTSKDSKQPKMDEIVPNASGNVVAAPMVDVVDHSAVEMKIKDEQQHQRQHQPLINSTCDKIEPSECSKEMIVAMKQVDSKEDVDSIASAAAMPAIAAVTPHTPKPEALAPNPDVANQFVSYLQNVELAAETKAPLDNSNEADITTGTNSHDFVFSDTIDHAYFQEHQSTINHNFFTSSSSSNTATTAANKLEEHSDKPEDSPLPIASSISGSTPASSITSTSCTSSSSSSASMSSSCSSSNSGSTTTAPTTSSSAGAPTAPLTLAAAAETTLANVQAMLSTVAKLQQQQQELPVELNSNEMYQHVQHDWNFGDIKLSSSQSSGDQQRNLSHEAIDLMDVVQDADVIDDIMHNDVCHDVLGDEDEGDQEEDEDDEVVECMTEEQQLIDEDSEAVREIVDKLQQHQQQQNQQQHHQQLHIQDVVQLAQHSFMPQAHSEFGNDIGQEMLCDAVPMSAAEMEVSSTVITNSSNSNDSSNNISLCSSTNSLTINQMPHQASQQPQQNAQSNAQQQRQILVDSNGQIIGNFLLQQQRQQQQQQLLQQFTLQAAAAQQQQQQQQQHQQQQQQQQQATSSNSLGKTLPVALRNGTQQFLSPNLIAQQHQQQQQQQLEQHQQQATAQQKHQQIQQFALQQAQLHQRQLLAQAANNNLLQQQQQQQQNVALPTTQAKFIAKPLNIISMTRPANASPTTAATTANTASIPSAYANVVAVTGAQQQQSPPVPAPQQQTVQQQQLANHNSNMQQLPNVLTMKTLPPSGVPTTIAQQRLQPKMPTGKGRKATSNRLPPGAVNLERSYQICQAVIQNSPNRENLKAQLRPPAAILNQHQPTTTTAPAPINPVTLNVSTVAATPMSNITTATGSMAAAVAAAPPQNVLKQEELLVSGAVGAGALPAGLPPNVMGVGRPGVYKVIGPRMSGFPRKKYVQRKPSPTTLIRHVFSPGPGGATATAQQLQMLQQHHQSTTSPVPVQNPQQPAPEQLIHQNGNGQYVLVHRANVGAADNQAPRASSAPPMHQNQFVTVQNPLHSINGIPMGGRGRPASVDTTAGSGNVIAPPISATDALHHHHHEMQQQQQHQQPQPLGNVGAAANIVRRNIAAGPNIAYIDGSNTNSSAVALMEAGNNYIVTTNASPTAAPSPINQQPQSQPTGTQHQHPLLQLHQTGENTPPGNEATATANNCACSLNAMVICQQCGAFCHDDCIGAAKLCVACVIR</sequence>
<accession>Q9V727</accession>
<accession>O76930</accession>
<name>ASX_DROME</name>
<evidence type="ECO:0000255" key="1">
    <source>
        <dbReference type="PROSITE-ProRule" id="PRU01264"/>
    </source>
</evidence>
<evidence type="ECO:0000256" key="2">
    <source>
        <dbReference type="SAM" id="MobiDB-lite"/>
    </source>
</evidence>
<evidence type="ECO:0000269" key="3">
    <source>
    </source>
</evidence>
<evidence type="ECO:0000269" key="4">
    <source>
    </source>
</evidence>
<evidence type="ECO:0000269" key="5">
    <source>
    </source>
</evidence>
<evidence type="ECO:0000269" key="6">
    <source>
    </source>
</evidence>
<evidence type="ECO:0000269" key="7">
    <source>
    </source>
</evidence>
<evidence type="ECO:0000269" key="8">
    <source>
    </source>
</evidence>
<evidence type="ECO:0000269" key="9">
    <source>
    </source>
</evidence>
<evidence type="ECO:0000305" key="10"/>
<evidence type="ECO:0000305" key="11">
    <source>
    </source>
</evidence>
<evidence type="ECO:0000312" key="12">
    <source>
        <dbReference type="FlyBase" id="FBgn0261823"/>
    </source>
</evidence>
<evidence type="ECO:0000312" key="13">
    <source>
        <dbReference type="PDB" id="6CGA"/>
    </source>
</evidence>
<evidence type="ECO:0000312" key="14">
    <source>
        <dbReference type="PDB" id="6HGC"/>
    </source>
</evidence>
<evidence type="ECO:0000312" key="15">
    <source>
        <dbReference type="Proteomes" id="UP000000803"/>
    </source>
</evidence>
<evidence type="ECO:0007829" key="16">
    <source>
        <dbReference type="PDB" id="6CGA"/>
    </source>
</evidence>
<evidence type="ECO:0007829" key="17">
    <source>
        <dbReference type="PDB" id="6HGC"/>
    </source>
</evidence>
<organism evidence="15">
    <name type="scientific">Drosophila melanogaster</name>
    <name type="common">Fruit fly</name>
    <dbReference type="NCBI Taxonomy" id="7227"/>
    <lineage>
        <taxon>Eukaryota</taxon>
        <taxon>Metazoa</taxon>
        <taxon>Ecdysozoa</taxon>
        <taxon>Arthropoda</taxon>
        <taxon>Hexapoda</taxon>
        <taxon>Insecta</taxon>
        <taxon>Pterygota</taxon>
        <taxon>Neoptera</taxon>
        <taxon>Endopterygota</taxon>
        <taxon>Diptera</taxon>
        <taxon>Brachycera</taxon>
        <taxon>Muscomorpha</taxon>
        <taxon>Ephydroidea</taxon>
        <taxon>Drosophilidae</taxon>
        <taxon>Drosophila</taxon>
        <taxon>Sophophora</taxon>
    </lineage>
</organism>
<gene>
    <name evidence="12" type="primary">Asx</name>
    <name evidence="12" type="ORF">CG8787</name>
</gene>
<proteinExistence type="evidence at protein level"/>
<dbReference type="EMBL" id="AJ001164">
    <property type="protein sequence ID" value="CAA04568.1"/>
    <property type="status" value="ALT_FRAME"/>
    <property type="molecule type" value="mRNA"/>
</dbReference>
<dbReference type="EMBL" id="AE013599">
    <property type="protein sequence ID" value="AAF58239.1"/>
    <property type="molecule type" value="Genomic_DNA"/>
</dbReference>
<dbReference type="PIR" id="T13748">
    <property type="entry name" value="T13748"/>
</dbReference>
<dbReference type="RefSeq" id="NP_725398.1">
    <property type="nucleotide sequence ID" value="NM_166057.2"/>
</dbReference>
<dbReference type="PDB" id="6CGA">
    <property type="method" value="X-ray"/>
    <property type="resolution" value="3.50 A"/>
    <property type="chains" value="B/D=207-340"/>
</dbReference>
<dbReference type="PDB" id="6HGC">
    <property type="method" value="X-ray"/>
    <property type="resolution" value="3.02 A"/>
    <property type="chains" value="C=209-318"/>
</dbReference>
<dbReference type="PDBsum" id="6CGA"/>
<dbReference type="PDBsum" id="6HGC"/>
<dbReference type="SMR" id="Q9V727"/>
<dbReference type="BioGRID" id="62360">
    <property type="interactions" value="20"/>
</dbReference>
<dbReference type="ComplexPortal" id="CPX-2577">
    <property type="entry name" value="Polycomb repressive deubiquitinase complex"/>
</dbReference>
<dbReference type="DIP" id="DIP-22881N"/>
<dbReference type="FunCoup" id="Q9V727">
    <property type="interactions" value="625"/>
</dbReference>
<dbReference type="IntAct" id="Q9V727">
    <property type="interactions" value="11"/>
</dbReference>
<dbReference type="STRING" id="7227.FBpp0305149"/>
<dbReference type="GlyGen" id="Q9V727">
    <property type="glycosylation" value="1 site"/>
</dbReference>
<dbReference type="PaxDb" id="7227-FBpp0305149"/>
<dbReference type="EnsemblMetazoa" id="FBtr0087493">
    <property type="protein sequence ID" value="FBpp0086622"/>
    <property type="gene ID" value="FBgn0261823"/>
</dbReference>
<dbReference type="GeneID" id="36612"/>
<dbReference type="KEGG" id="dme:Dmel_CG8787"/>
<dbReference type="AGR" id="FB:FBgn0261823"/>
<dbReference type="CTD" id="36612"/>
<dbReference type="FlyBase" id="FBgn0261823">
    <property type="gene designation" value="Asx"/>
</dbReference>
<dbReference type="VEuPathDB" id="VectorBase:FBgn0261823"/>
<dbReference type="eggNOG" id="ENOG502QWPH">
    <property type="taxonomic scope" value="Eukaryota"/>
</dbReference>
<dbReference type="GeneTree" id="ENSGT00520000055578"/>
<dbReference type="InParanoid" id="Q9V727"/>
<dbReference type="OrthoDB" id="9348951at2759"/>
<dbReference type="PhylomeDB" id="Q9V727"/>
<dbReference type="Reactome" id="R-DME-5689603">
    <property type="pathway name" value="UCH proteinases"/>
</dbReference>
<dbReference type="BioGRID-ORCS" id="36612">
    <property type="hits" value="0 hits in 3 CRISPR screens"/>
</dbReference>
<dbReference type="CD-CODE" id="58FDC23F">
    <property type="entry name" value="PcG body"/>
</dbReference>
<dbReference type="GenomeRNAi" id="36612"/>
<dbReference type="PRO" id="PR:Q9V727"/>
<dbReference type="Proteomes" id="UP000000803">
    <property type="component" value="Chromosome 2R"/>
</dbReference>
<dbReference type="Bgee" id="FBgn0261823">
    <property type="expression patterns" value="Expressed in dorsal appendage forming follicle cell in ovary and 207 other cell types or tissues"/>
</dbReference>
<dbReference type="ExpressionAtlas" id="Q9V727">
    <property type="expression patterns" value="baseline and differential"/>
</dbReference>
<dbReference type="GO" id="GO:0000785">
    <property type="term" value="C:chromatin"/>
    <property type="evidence" value="ECO:0000314"/>
    <property type="project" value="UniProtKB"/>
</dbReference>
<dbReference type="GO" id="GO:0005634">
    <property type="term" value="C:nucleus"/>
    <property type="evidence" value="ECO:0000314"/>
    <property type="project" value="FlyBase"/>
</dbReference>
<dbReference type="GO" id="GO:0035517">
    <property type="term" value="C:PR-DUB complex"/>
    <property type="evidence" value="ECO:0000314"/>
    <property type="project" value="UniProtKB"/>
</dbReference>
<dbReference type="GO" id="GO:0003682">
    <property type="term" value="F:chromatin binding"/>
    <property type="evidence" value="ECO:0000314"/>
    <property type="project" value="FlyBase"/>
</dbReference>
<dbReference type="GO" id="GO:0035800">
    <property type="term" value="F:deubiquitinase activator activity"/>
    <property type="evidence" value="ECO:0000314"/>
    <property type="project" value="FlyBase"/>
</dbReference>
<dbReference type="GO" id="GO:0003677">
    <property type="term" value="F:DNA binding"/>
    <property type="evidence" value="ECO:0007669"/>
    <property type="project" value="InterPro"/>
</dbReference>
<dbReference type="GO" id="GO:0008270">
    <property type="term" value="F:zinc ion binding"/>
    <property type="evidence" value="ECO:0007669"/>
    <property type="project" value="UniProtKB-KW"/>
</dbReference>
<dbReference type="GO" id="GO:0009887">
    <property type="term" value="P:animal organ morphogenesis"/>
    <property type="evidence" value="ECO:0000318"/>
    <property type="project" value="GO_Central"/>
</dbReference>
<dbReference type="GO" id="GO:0007469">
    <property type="term" value="P:antennal development"/>
    <property type="evidence" value="ECO:0000315"/>
    <property type="project" value="FlyBase"/>
</dbReference>
<dbReference type="GO" id="GO:0009948">
    <property type="term" value="P:anterior/posterior axis specification"/>
    <property type="evidence" value="ECO:0000315"/>
    <property type="project" value="UniProtKB"/>
</dbReference>
<dbReference type="GO" id="GO:0007475">
    <property type="term" value="P:apposition of dorsal and ventral imaginal disc-derived wing surfaces"/>
    <property type="evidence" value="ECO:0000315"/>
    <property type="project" value="FlyBase"/>
</dbReference>
<dbReference type="GO" id="GO:0001709">
    <property type="term" value="P:cell fate determination"/>
    <property type="evidence" value="ECO:0000316"/>
    <property type="project" value="FlyBase"/>
</dbReference>
<dbReference type="GO" id="GO:0040029">
    <property type="term" value="P:epigenetic regulation of gene expression"/>
    <property type="evidence" value="ECO:0000315"/>
    <property type="project" value="UniProtKB"/>
</dbReference>
<dbReference type="GO" id="GO:0045892">
    <property type="term" value="P:negative regulation of DNA-templated transcription"/>
    <property type="evidence" value="ECO:0000303"/>
    <property type="project" value="UniProtKB"/>
</dbReference>
<dbReference type="GO" id="GO:0045893">
    <property type="term" value="P:positive regulation of DNA-templated transcription"/>
    <property type="evidence" value="ECO:0000303"/>
    <property type="project" value="UniProtKB"/>
</dbReference>
<dbReference type="GO" id="GO:0045944">
    <property type="term" value="P:positive regulation of transcription by RNA polymerase II"/>
    <property type="evidence" value="ECO:0000318"/>
    <property type="project" value="GO_Central"/>
</dbReference>
<dbReference type="GO" id="GO:0010468">
    <property type="term" value="P:regulation of gene expression"/>
    <property type="evidence" value="ECO:0000315"/>
    <property type="project" value="FlyBase"/>
</dbReference>
<dbReference type="GO" id="GO:0006357">
    <property type="term" value="P:regulation of transcription by RNA polymerase II"/>
    <property type="evidence" value="ECO:0000315"/>
    <property type="project" value="UniProtKB"/>
</dbReference>
<dbReference type="GO" id="GO:0045498">
    <property type="term" value="P:sex comb development"/>
    <property type="evidence" value="ECO:0000304"/>
    <property type="project" value="UniProtKB"/>
</dbReference>
<dbReference type="GO" id="GO:0035186">
    <property type="term" value="P:syncytial blastoderm mitotic cell cycle"/>
    <property type="evidence" value="ECO:0000315"/>
    <property type="project" value="FlyBase"/>
</dbReference>
<dbReference type="DisProt" id="DP02891"/>
<dbReference type="InterPro" id="IPR026905">
    <property type="entry name" value="ASX-like_PHD"/>
</dbReference>
<dbReference type="InterPro" id="IPR024811">
    <property type="entry name" value="ASX/ASX-like"/>
</dbReference>
<dbReference type="InterPro" id="IPR028020">
    <property type="entry name" value="ASX_DEUBAD_dom"/>
</dbReference>
<dbReference type="InterPro" id="IPR044867">
    <property type="entry name" value="DEUBAD_dom"/>
</dbReference>
<dbReference type="PANTHER" id="PTHR13578">
    <property type="entry name" value="ADDITIONAL SEX COMBS LIKE PROTEIN ASXL"/>
    <property type="match status" value="1"/>
</dbReference>
<dbReference type="PANTHER" id="PTHR13578:SF20">
    <property type="entry name" value="POLYCOMB PROTEIN ASX"/>
    <property type="match status" value="1"/>
</dbReference>
<dbReference type="Pfam" id="PF13919">
    <property type="entry name" value="ASXH"/>
    <property type="match status" value="1"/>
</dbReference>
<dbReference type="Pfam" id="PF13922">
    <property type="entry name" value="PHD_3"/>
    <property type="match status" value="1"/>
</dbReference>
<dbReference type="PROSITE" id="PS51916">
    <property type="entry name" value="DEUBAD"/>
    <property type="match status" value="1"/>
</dbReference>
<reference key="1">
    <citation type="journal article" date="1998" name="Development">
        <title>The Additional sex combs gene of Drosophila encodes a chromatin protein that binds to shared and unique Polycomb group sites on polytene chromosomes.</title>
        <authorList>
            <person name="Sinclair D.A.R."/>
            <person name="Milne T.A."/>
            <person name="Hodgson J.W."/>
            <person name="Shellard J."/>
            <person name="Salinas C.A."/>
            <person name="Kyba M."/>
            <person name="Randazzo F."/>
            <person name="Brock H.W."/>
        </authorList>
    </citation>
    <scope>NUCLEOTIDE SEQUENCE [MRNA]</scope>
    <scope>FUNCTION</scope>
    <scope>SUBCELLULAR LOCATION</scope>
    <scope>DEVELOPMENTAL STAGE</scope>
    <source>
        <tissue>Imaginal disk</tissue>
    </source>
</reference>
<reference key="2">
    <citation type="journal article" date="2000" name="Science">
        <title>The genome sequence of Drosophila melanogaster.</title>
        <authorList>
            <person name="Adams M.D."/>
            <person name="Celniker S.E."/>
            <person name="Holt R.A."/>
            <person name="Evans C.A."/>
            <person name="Gocayne J.D."/>
            <person name="Amanatides P.G."/>
            <person name="Scherer S.E."/>
            <person name="Li P.W."/>
            <person name="Hoskins R.A."/>
            <person name="Galle R.F."/>
            <person name="George R.A."/>
            <person name="Lewis S.E."/>
            <person name="Richards S."/>
            <person name="Ashburner M."/>
            <person name="Henderson S.N."/>
            <person name="Sutton G.G."/>
            <person name="Wortman J.R."/>
            <person name="Yandell M.D."/>
            <person name="Zhang Q."/>
            <person name="Chen L.X."/>
            <person name="Brandon R.C."/>
            <person name="Rogers Y.-H.C."/>
            <person name="Blazej R.G."/>
            <person name="Champe M."/>
            <person name="Pfeiffer B.D."/>
            <person name="Wan K.H."/>
            <person name="Doyle C."/>
            <person name="Baxter E.G."/>
            <person name="Helt G."/>
            <person name="Nelson C.R."/>
            <person name="Miklos G.L.G."/>
            <person name="Abril J.F."/>
            <person name="Agbayani A."/>
            <person name="An H.-J."/>
            <person name="Andrews-Pfannkoch C."/>
            <person name="Baldwin D."/>
            <person name="Ballew R.M."/>
            <person name="Basu A."/>
            <person name="Baxendale J."/>
            <person name="Bayraktaroglu L."/>
            <person name="Beasley E.M."/>
            <person name="Beeson K.Y."/>
            <person name="Benos P.V."/>
            <person name="Berman B.P."/>
            <person name="Bhandari D."/>
            <person name="Bolshakov S."/>
            <person name="Borkova D."/>
            <person name="Botchan M.R."/>
            <person name="Bouck J."/>
            <person name="Brokstein P."/>
            <person name="Brottier P."/>
            <person name="Burtis K.C."/>
            <person name="Busam D.A."/>
            <person name="Butler H."/>
            <person name="Cadieu E."/>
            <person name="Center A."/>
            <person name="Chandra I."/>
            <person name="Cherry J.M."/>
            <person name="Cawley S."/>
            <person name="Dahlke C."/>
            <person name="Davenport L.B."/>
            <person name="Davies P."/>
            <person name="de Pablos B."/>
            <person name="Delcher A."/>
            <person name="Deng Z."/>
            <person name="Mays A.D."/>
            <person name="Dew I."/>
            <person name="Dietz S.M."/>
            <person name="Dodson K."/>
            <person name="Doup L.E."/>
            <person name="Downes M."/>
            <person name="Dugan-Rocha S."/>
            <person name="Dunkov B.C."/>
            <person name="Dunn P."/>
            <person name="Durbin K.J."/>
            <person name="Evangelista C.C."/>
            <person name="Ferraz C."/>
            <person name="Ferriera S."/>
            <person name="Fleischmann W."/>
            <person name="Fosler C."/>
            <person name="Gabrielian A.E."/>
            <person name="Garg N.S."/>
            <person name="Gelbart W.M."/>
            <person name="Glasser K."/>
            <person name="Glodek A."/>
            <person name="Gong F."/>
            <person name="Gorrell J.H."/>
            <person name="Gu Z."/>
            <person name="Guan P."/>
            <person name="Harris M."/>
            <person name="Harris N.L."/>
            <person name="Harvey D.A."/>
            <person name="Heiman T.J."/>
            <person name="Hernandez J.R."/>
            <person name="Houck J."/>
            <person name="Hostin D."/>
            <person name="Houston K.A."/>
            <person name="Howland T.J."/>
            <person name="Wei M.-H."/>
            <person name="Ibegwam C."/>
            <person name="Jalali M."/>
            <person name="Kalush F."/>
            <person name="Karpen G.H."/>
            <person name="Ke Z."/>
            <person name="Kennison J.A."/>
            <person name="Ketchum K.A."/>
            <person name="Kimmel B.E."/>
            <person name="Kodira C.D."/>
            <person name="Kraft C.L."/>
            <person name="Kravitz S."/>
            <person name="Kulp D."/>
            <person name="Lai Z."/>
            <person name="Lasko P."/>
            <person name="Lei Y."/>
            <person name="Levitsky A.A."/>
            <person name="Li J.H."/>
            <person name="Li Z."/>
            <person name="Liang Y."/>
            <person name="Lin X."/>
            <person name="Liu X."/>
            <person name="Mattei B."/>
            <person name="McIntosh T.C."/>
            <person name="McLeod M.P."/>
            <person name="McPherson D."/>
            <person name="Merkulov G."/>
            <person name="Milshina N.V."/>
            <person name="Mobarry C."/>
            <person name="Morris J."/>
            <person name="Moshrefi A."/>
            <person name="Mount S.M."/>
            <person name="Moy M."/>
            <person name="Murphy B."/>
            <person name="Murphy L."/>
            <person name="Muzny D.M."/>
            <person name="Nelson D.L."/>
            <person name="Nelson D.R."/>
            <person name="Nelson K.A."/>
            <person name="Nixon K."/>
            <person name="Nusskern D.R."/>
            <person name="Pacleb J.M."/>
            <person name="Palazzolo M."/>
            <person name="Pittman G.S."/>
            <person name="Pan S."/>
            <person name="Pollard J."/>
            <person name="Puri V."/>
            <person name="Reese M.G."/>
            <person name="Reinert K."/>
            <person name="Remington K."/>
            <person name="Saunders R.D.C."/>
            <person name="Scheeler F."/>
            <person name="Shen H."/>
            <person name="Shue B.C."/>
            <person name="Siden-Kiamos I."/>
            <person name="Simpson M."/>
            <person name="Skupski M.P."/>
            <person name="Smith T.J."/>
            <person name="Spier E."/>
            <person name="Spradling A.C."/>
            <person name="Stapleton M."/>
            <person name="Strong R."/>
            <person name="Sun E."/>
            <person name="Svirskas R."/>
            <person name="Tector C."/>
            <person name="Turner R."/>
            <person name="Venter E."/>
            <person name="Wang A.H."/>
            <person name="Wang X."/>
            <person name="Wang Z.-Y."/>
            <person name="Wassarman D.A."/>
            <person name="Weinstock G.M."/>
            <person name="Weissenbach J."/>
            <person name="Williams S.M."/>
            <person name="Woodage T."/>
            <person name="Worley K.C."/>
            <person name="Wu D."/>
            <person name="Yang S."/>
            <person name="Yao Q.A."/>
            <person name="Ye J."/>
            <person name="Yeh R.-F."/>
            <person name="Zaveri J.S."/>
            <person name="Zhan M."/>
            <person name="Zhang G."/>
            <person name="Zhao Q."/>
            <person name="Zheng L."/>
            <person name="Zheng X.H."/>
            <person name="Zhong F.N."/>
            <person name="Zhong W."/>
            <person name="Zhou X."/>
            <person name="Zhu S.C."/>
            <person name="Zhu X."/>
            <person name="Smith H.O."/>
            <person name="Gibbs R.A."/>
            <person name="Myers E.W."/>
            <person name="Rubin G.M."/>
            <person name="Venter J.C."/>
        </authorList>
    </citation>
    <scope>NUCLEOTIDE SEQUENCE [LARGE SCALE GENOMIC DNA]</scope>
    <source>
        <strain>Berkeley</strain>
    </source>
</reference>
<reference key="3">
    <citation type="journal article" date="2002" name="Genome Biol.">
        <title>Annotation of the Drosophila melanogaster euchromatic genome: a systematic review.</title>
        <authorList>
            <person name="Misra S."/>
            <person name="Crosby M.A."/>
            <person name="Mungall C.J."/>
            <person name="Matthews B.B."/>
            <person name="Campbell K.S."/>
            <person name="Hradecky P."/>
            <person name="Huang Y."/>
            <person name="Kaminker J.S."/>
            <person name="Millburn G.H."/>
            <person name="Prochnik S.E."/>
            <person name="Smith C.D."/>
            <person name="Tupy J.L."/>
            <person name="Whitfield E.J."/>
            <person name="Bayraktaroglu L."/>
            <person name="Berman B.P."/>
            <person name="Bettencourt B.R."/>
            <person name="Celniker S.E."/>
            <person name="de Grey A.D.N.J."/>
            <person name="Drysdale R.A."/>
            <person name="Harris N.L."/>
            <person name="Richter J."/>
            <person name="Russo S."/>
            <person name="Schroeder A.J."/>
            <person name="Shu S.Q."/>
            <person name="Stapleton M."/>
            <person name="Yamada C."/>
            <person name="Ashburner M."/>
            <person name="Gelbart W.M."/>
            <person name="Rubin G.M."/>
            <person name="Lewis S.E."/>
        </authorList>
    </citation>
    <scope>GENOME REANNOTATION</scope>
    <source>
        <strain>Berkeley</strain>
    </source>
</reference>
<reference key="4">
    <citation type="journal article" date="2001" name="Dev. Biol.">
        <title>Tantalus, a novel ASX-interacting protein with tissue-specific functions.</title>
        <authorList>
            <person name="Dietrich B.H."/>
            <person name="Moore J."/>
            <person name="Kyba M."/>
            <person name="dosSantos G."/>
            <person name="McCloskey F."/>
            <person name="Milne T.A."/>
            <person name="Brock H.W."/>
            <person name="Krause H.M."/>
        </authorList>
    </citation>
    <scope>INTERACTION WITH TANT</scope>
</reference>
<reference key="5">
    <citation type="journal article" date="2010" name="Nature">
        <title>Histone H2A deubiquitinase activity of the Polycomb repressive complex PR-DUB.</title>
        <authorList>
            <person name="Scheuermann J.C."/>
            <person name="de Ayala Alonso A.G."/>
            <person name="Oktaba K."/>
            <person name="Ly-Hartig N."/>
            <person name="McGinty R.K."/>
            <person name="Fraterman S."/>
            <person name="Wilm M."/>
            <person name="Muir T.W."/>
            <person name="Muller J."/>
        </authorList>
    </citation>
    <scope>FUNCTION</scope>
    <scope>IDENTIFICATION IN THE PR-DUB COMPLEX</scope>
    <scope>INTERACTION WITH CALY</scope>
</reference>
<reference key="6">
    <citation type="journal article" date="2015" name="Epigenetics Chromatin">
        <title>Drosophila Cyclin G and epigenetic maintenance of gene expression during development.</title>
        <authorList>
            <person name="Dupont C.A."/>
            <person name="Dardalhon-Cumenal D."/>
            <person name="Kyba M."/>
            <person name="Brock H.W."/>
            <person name="Randsholt N.B."/>
            <person name="Peronnet F."/>
        </authorList>
    </citation>
    <scope>INTERACTION WITH CYCG</scope>
</reference>
<reference key="7">
    <citation type="journal article" date="2022" name="Genome Biol.">
        <title>MBD5 and MBD6 stabilize the BAP1 complex and promote BAP1-dependent cancer.</title>
        <authorList>
            <person name="Tsuboyama N."/>
            <person name="Szczepanski A.P."/>
            <person name="Zhao Z."/>
            <person name="Wang L."/>
        </authorList>
    </citation>
    <scope>FUNCTION</scope>
    <scope>IDENTIFICATION IN THE PR-DUB COMPLEX</scope>
    <scope>INTERACTION WITH SBA</scope>
    <scope>IDENTIFICATION BY MASS SPECTROMETRY</scope>
</reference>
<reference evidence="13" key="8">
    <citation type="journal article" date="2018" name="Nat. Commun.">
        <title>A bidentate Polycomb Repressive-Deubiquitinase complex is required for efficient activity on nucleosomes.</title>
        <authorList>
            <person name="Foglizzo M."/>
            <person name="Middleton A.J."/>
            <person name="Burgess A.E."/>
            <person name="Crowther J.M."/>
            <person name="Dobson R.C.J."/>
            <person name="Murphy J.M."/>
            <person name="Day C.L."/>
            <person name="Mace P.D."/>
        </authorList>
    </citation>
    <scope>X-RAY CRYSTALLOGRAPHY (3.5 ANGSTROMS) OF 207-340 IN COMPLEX WITH CALY</scope>
    <scope>FUNCTION</scope>
    <scope>INTERACTION WITH CALY</scope>
    <scope>DOMAIN DEUBAD</scope>
    <scope>MUTAGENESIS OF GLU-284 AND ARG-288</scope>
</reference>
<reference evidence="14" key="9">
    <citation type="journal article" date="2019" name="Structure">
        <title>Structural Basis for the Activation of the Deubiquitinase Calypso by the Polycomb Protein ASX.</title>
        <authorList>
            <person name="De I."/>
            <person name="Chittock E.C."/>
            <person name="Groetsch H."/>
            <person name="Miller T.C.R."/>
            <person name="McCarthy A.A."/>
            <person name="Mueller C.W."/>
        </authorList>
    </citation>
    <scope>X-RAY CRYSTALLOGRAPHY (3.0 ANGSTROMS) OF 209-318 IN COMPLEX WITH CALY</scope>
    <scope>FUNCTION</scope>
    <scope>INTERACTION WITH CALY</scope>
    <scope>DOMAIN DEUBAD</scope>
</reference>
<keyword id="KW-0002">3D-structure</keyword>
<keyword id="KW-0156">Chromatin regulator</keyword>
<keyword id="KW-0158">Chromosome</keyword>
<keyword id="KW-0217">Developmental protein</keyword>
<keyword id="KW-0479">Metal-binding</keyword>
<keyword id="KW-0539">Nucleus</keyword>
<keyword id="KW-1185">Reference proteome</keyword>
<keyword id="KW-0677">Repeat</keyword>
<keyword id="KW-0678">Repressor</keyword>
<keyword id="KW-0804">Transcription</keyword>
<keyword id="KW-0805">Transcription regulation</keyword>
<keyword id="KW-0862">Zinc</keyword>
<keyword id="KW-0863">Zinc-finger</keyword>
<comment type="function">
    <text evidence="4 6 7 8 9 11">Non-catalytic component of the polycomb repressive deubiquitinase (PR-DUB) complex, a complex that specifically mediates deubiquitination of histone H2A monoubiquitinated at 'Lys-119' (H2AK118ub1) (PubMed:20436459, PubMed:30258054, PubMed:30639226, PubMed:36180891). Activator of the PR-DUB complex involved in ubiquitin binding and allosteric activation of calypso deubiquitinase activity (PubMed:30639226). PR-DUB does not deubiquitinate monoubiquitinated histone H2B (PubMed:20436459). PR-DUB is required to maintain the transcriptionally repressive state of homeotic genes throughout development (PubMed:20436459). The PR-DUB complex has weak or no activity toward 'Lys-48'- and 'Lys-63'-linked polyubiquitin chains (PubMed:20436459). Atypical Polycomb group protein, which may be involved in both Polycomb group (PcG) and trithorax group (trxG) complexes (PubMed:9477319). PcG and trxG proteins act by forming multiprotein complexes, which are respectively required to maintain the transcriptionally repressive and transcriptionally active state of homeotic genes throughout development (Probable). PcG and trxG protein complexes are not required to initiate repression and activation, but to maintain it during later stages of development (Probable).</text>
</comment>
<comment type="subunit">
    <text evidence="3 4 5 6 7 8">Component of the polycomb repressive deubiquitinase (PR-DUB) complex, at least composed of caly/calypso, Asx and sba (MBD5/6 homolog) (PubMed:20436459, PubMed:30258054, PubMed:30639226, PubMed:36180891). Interacts (via DEUBAD domain) with caly/calypso (via ULD domain); the interaction produces a stable heterodimer with a composite binding site for ubiquitin (PubMed:20436459, PubMed:30258054, PubMed:30639226). Two copies of the caly-Asx heterodimer assemble into a bidentate tetramer (PubMed:30258054). Interacts (via PHD domain) with sba (probably via MBD domain); the interaction is important for the stability of the PR-DUB complex (PubMed:36180891). Interacts with tant (PubMed:11397012). Interacts with cyclin CycG (PubMed:25995770).</text>
</comment>
<comment type="interaction">
    <interactant intactId="EBI-103394">
        <id>Q9V727</id>
    </interactant>
    <interactant intactId="EBI-15851838">
        <id>Q7K5N4</id>
        <label>caly</label>
    </interactant>
    <organismsDiffer>false</organismsDiffer>
    <experiments>2</experiments>
</comment>
<comment type="interaction">
    <interactant intactId="EBI-103394">
        <id>Q9V727</id>
    </interactant>
    <interactant intactId="EBI-139891">
        <id>Q8T0D4</id>
        <label>tant</label>
    </interactant>
    <organismsDiffer>false</organismsDiffer>
    <experiments>3</experiments>
</comment>
<comment type="subcellular location">
    <subcellularLocation>
        <location evidence="9">Nucleus</location>
    </subcellularLocation>
    <subcellularLocation>
        <location evidence="9">Chromosome</location>
    </subcellularLocation>
    <text>Associated with chromatin. Colocalizes with many PcG sites on polytene chromosomes. It also associates with many unique sites on polytene chromosomes.</text>
</comment>
<comment type="tissue specificity">
    <text>Highly expressed in nurse cells and deposited in oocytes late in oogenesis. Ubiquitous in early embryos. Late embryos show higher levels in CNS and neurectoderm.</text>
</comment>
<comment type="developmental stage">
    <text evidence="9">Expressed both maternally and zygotically. Early embryos have high levels of expression, this drops off and zygotic expression begins at 3-6 hours embryos. Expression levels are low in larvae and medium in pupae and adults.</text>
</comment>
<comment type="domain">
    <text evidence="6 7">The DEUBAD domain is involved in modulation of the ubiquitin C-terminal hydrolase activity of caly/calypso (PubMed:30639226). It contains two Leu-Xaa-Xaa-Leu-Leu (LXXLL) motifs involved in the interaction with caly/calypso (PubMed:30639226). It also contains an Asn-Glu-Phe (NEF) motif involved in stabilizing the association of the PR-DUB complex with ubiquitin to promote deubiquitinase activity (PubMed:30258054, PubMed:30639226).</text>
</comment>
<comment type="similarity">
    <text evidence="10">Belongs to the Asx family.</text>
</comment>
<comment type="sequence caution" evidence="10">
    <conflict type="frameshift">
        <sequence resource="EMBL-CDS" id="CAA04568"/>
    </conflict>
</comment>
<protein>
    <recommendedName>
        <fullName evidence="10">Polycomb group protein Asx</fullName>
    </recommendedName>
    <alternativeName>
        <fullName evidence="10">Protein additional sex combs</fullName>
    </alternativeName>
</protein>